<accession>O51145</accession>
<dbReference type="EC" id="3.4.24.-"/>
<dbReference type="EMBL" id="AE000783">
    <property type="protein sequence ID" value="AAC66514.2"/>
    <property type="molecule type" value="Genomic_DNA"/>
</dbReference>
<dbReference type="PIR" id="F70114">
    <property type="entry name" value="F70114"/>
</dbReference>
<dbReference type="RefSeq" id="NP_212252.2">
    <property type="nucleotide sequence ID" value="NC_001318.1"/>
</dbReference>
<dbReference type="RefSeq" id="WP_010889688.1">
    <property type="nucleotide sequence ID" value="NC_001318.1"/>
</dbReference>
<dbReference type="SMR" id="O51145"/>
<dbReference type="STRING" id="224326.BB_0118"/>
<dbReference type="PaxDb" id="224326-BB_0118"/>
<dbReference type="EnsemblBacteria" id="AAC66514">
    <property type="protein sequence ID" value="AAC66514"/>
    <property type="gene ID" value="BB_0118"/>
</dbReference>
<dbReference type="KEGG" id="bbu:BB_0118"/>
<dbReference type="PATRIC" id="fig|224326.49.peg.516"/>
<dbReference type="HOGENOM" id="CLU_025778_0_0_12"/>
<dbReference type="OrthoDB" id="9782003at2"/>
<dbReference type="Proteomes" id="UP000001807">
    <property type="component" value="Chromosome"/>
</dbReference>
<dbReference type="GO" id="GO:0005886">
    <property type="term" value="C:plasma membrane"/>
    <property type="evidence" value="ECO:0007669"/>
    <property type="project" value="UniProtKB-SubCell"/>
</dbReference>
<dbReference type="GO" id="GO:0046872">
    <property type="term" value="F:metal ion binding"/>
    <property type="evidence" value="ECO:0007669"/>
    <property type="project" value="UniProtKB-KW"/>
</dbReference>
<dbReference type="GO" id="GO:0004222">
    <property type="term" value="F:metalloendopeptidase activity"/>
    <property type="evidence" value="ECO:0007669"/>
    <property type="project" value="InterPro"/>
</dbReference>
<dbReference type="GO" id="GO:0006508">
    <property type="term" value="P:proteolysis"/>
    <property type="evidence" value="ECO:0007669"/>
    <property type="project" value="UniProtKB-KW"/>
</dbReference>
<dbReference type="CDD" id="cd06163">
    <property type="entry name" value="S2P-M50_PDZ_RseP-like"/>
    <property type="match status" value="1"/>
</dbReference>
<dbReference type="Gene3D" id="2.30.42.10">
    <property type="match status" value="2"/>
</dbReference>
<dbReference type="InterPro" id="IPR001478">
    <property type="entry name" value="PDZ"/>
</dbReference>
<dbReference type="InterPro" id="IPR041489">
    <property type="entry name" value="PDZ_6"/>
</dbReference>
<dbReference type="InterPro" id="IPR036034">
    <property type="entry name" value="PDZ_sf"/>
</dbReference>
<dbReference type="InterPro" id="IPR004387">
    <property type="entry name" value="Pept_M50_Zn"/>
</dbReference>
<dbReference type="InterPro" id="IPR008915">
    <property type="entry name" value="Peptidase_M50"/>
</dbReference>
<dbReference type="NCBIfam" id="TIGR00054">
    <property type="entry name" value="RIP metalloprotease RseP"/>
    <property type="match status" value="1"/>
</dbReference>
<dbReference type="PANTHER" id="PTHR42837:SF2">
    <property type="entry name" value="MEMBRANE METALLOPROTEASE ARASP2, CHLOROPLASTIC-RELATED"/>
    <property type="match status" value="1"/>
</dbReference>
<dbReference type="PANTHER" id="PTHR42837">
    <property type="entry name" value="REGULATOR OF SIGMA-E PROTEASE RSEP"/>
    <property type="match status" value="1"/>
</dbReference>
<dbReference type="Pfam" id="PF17820">
    <property type="entry name" value="PDZ_6"/>
    <property type="match status" value="1"/>
</dbReference>
<dbReference type="Pfam" id="PF02163">
    <property type="entry name" value="Peptidase_M50"/>
    <property type="match status" value="1"/>
</dbReference>
<dbReference type="SMART" id="SM00228">
    <property type="entry name" value="PDZ"/>
    <property type="match status" value="1"/>
</dbReference>
<dbReference type="SUPFAM" id="SSF50156">
    <property type="entry name" value="PDZ domain-like"/>
    <property type="match status" value="2"/>
</dbReference>
<dbReference type="PROSITE" id="PS00142">
    <property type="entry name" value="ZINC_PROTEASE"/>
    <property type="match status" value="1"/>
</dbReference>
<protein>
    <recommendedName>
        <fullName>Putative zinc metalloprotease BB_0118</fullName>
        <ecNumber>3.4.24.-</ecNumber>
    </recommendedName>
</protein>
<sequence>MYILFSVLALSFIIFIHELGHFLFAKLFKVKVEVFSVGIGPSILKFKINNTEYRLSPILLGGYCKLKGFDHLEKELKANKELEADKDSLFGISHFKKILIYFAGPLFNLIFSFIVFIFISMAGVIYFDYSSRVSILNKDSLLKDKFRDGDVILKVNDKKIKYFSDLRKFIPEEKSTVMFDVLREKENITFKETVSLQDFLKEIGPWADLVIADVVSNSPAKIAGMKPGDEIISIDNVILKNKRDLDYFLKNLNSDVVEIKFSRNGEIFSSKLVFHDKNKMIGIYFSPPLKRVVKVENVSSAIKNSFFKVVSALQDILYSIFLLMTNFLNASKSVSGPVGIVGILSSSYSLGILYWINSISFLSLILAGMNLFFIVIPIFDGGQIFISFIELLRGKRFKAKTIYSFYSFGIFFGLFLFGLGLFNDLKGLLNIFN</sequence>
<name>Y118_BORBU</name>
<feature type="chain" id="PRO_0000088431" description="Putative zinc metalloprotease BB_0118">
    <location>
        <begin position="1"/>
        <end position="433"/>
    </location>
</feature>
<feature type="transmembrane region" description="Helical" evidence="2">
    <location>
        <begin position="98"/>
        <end position="120"/>
    </location>
</feature>
<feature type="transmembrane region" description="Helical" evidence="2">
    <location>
        <begin position="334"/>
        <end position="356"/>
    </location>
</feature>
<feature type="transmembrane region" description="Helical" evidence="2">
    <location>
        <begin position="366"/>
        <end position="388"/>
    </location>
</feature>
<feature type="transmembrane region" description="Helical" evidence="2">
    <location>
        <begin position="401"/>
        <end position="423"/>
    </location>
</feature>
<feature type="domain" description="PDZ">
    <location>
        <begin position="193"/>
        <end position="265"/>
    </location>
</feature>
<feature type="active site" evidence="3">
    <location>
        <position position="18"/>
    </location>
</feature>
<feature type="binding site" evidence="3">
    <location>
        <position position="17"/>
    </location>
    <ligand>
        <name>Zn(2+)</name>
        <dbReference type="ChEBI" id="CHEBI:29105"/>
        <note>catalytic</note>
    </ligand>
</feature>
<feature type="binding site" evidence="3">
    <location>
        <position position="21"/>
    </location>
    <ligand>
        <name>Zn(2+)</name>
        <dbReference type="ChEBI" id="CHEBI:29105"/>
        <note>catalytic</note>
    </ligand>
</feature>
<keyword id="KW-0997">Cell inner membrane</keyword>
<keyword id="KW-1003">Cell membrane</keyword>
<keyword id="KW-0378">Hydrolase</keyword>
<keyword id="KW-0472">Membrane</keyword>
<keyword id="KW-0479">Metal-binding</keyword>
<keyword id="KW-0482">Metalloprotease</keyword>
<keyword id="KW-0645">Protease</keyword>
<keyword id="KW-1185">Reference proteome</keyword>
<keyword id="KW-0812">Transmembrane</keyword>
<keyword id="KW-1133">Transmembrane helix</keyword>
<keyword id="KW-0862">Zinc</keyword>
<reference key="1">
    <citation type="journal article" date="1997" name="Nature">
        <title>Genomic sequence of a Lyme disease spirochaete, Borrelia burgdorferi.</title>
        <authorList>
            <person name="Fraser C.M."/>
            <person name="Casjens S."/>
            <person name="Huang W.M."/>
            <person name="Sutton G.G."/>
            <person name="Clayton R.A."/>
            <person name="Lathigra R."/>
            <person name="White O."/>
            <person name="Ketchum K.A."/>
            <person name="Dodson R.J."/>
            <person name="Hickey E.K."/>
            <person name="Gwinn M.L."/>
            <person name="Dougherty B.A."/>
            <person name="Tomb J.-F."/>
            <person name="Fleischmann R.D."/>
            <person name="Richardson D.L."/>
            <person name="Peterson J.D."/>
            <person name="Kerlavage A.R."/>
            <person name="Quackenbush J."/>
            <person name="Salzberg S.L."/>
            <person name="Hanson M."/>
            <person name="van Vugt R."/>
            <person name="Palmer N."/>
            <person name="Adams M.D."/>
            <person name="Gocayne J.D."/>
            <person name="Weidman J.F."/>
            <person name="Utterback T.R."/>
            <person name="Watthey L."/>
            <person name="McDonald L.A."/>
            <person name="Artiach P."/>
            <person name="Bowman C."/>
            <person name="Garland S.A."/>
            <person name="Fujii C."/>
            <person name="Cotton M.D."/>
            <person name="Horst K."/>
            <person name="Roberts K.M."/>
            <person name="Hatch B."/>
            <person name="Smith H.O."/>
            <person name="Venter J.C."/>
        </authorList>
    </citation>
    <scope>NUCLEOTIDE SEQUENCE [LARGE SCALE GENOMIC DNA]</scope>
    <source>
        <strain>ATCC 35210 / DSM 4680 / CIP 102532 / B31</strain>
    </source>
</reference>
<comment type="cofactor">
    <cofactor evidence="4">
        <name>Zn(2+)</name>
        <dbReference type="ChEBI" id="CHEBI:29105"/>
    </cofactor>
</comment>
<comment type="subcellular location">
    <subcellularLocation>
        <location evidence="1">Cell inner membrane</location>
        <topology evidence="1">Multi-pass membrane protein</topology>
    </subcellularLocation>
</comment>
<comment type="similarity">
    <text evidence="4">Belongs to the peptidase M50B family.</text>
</comment>
<organism>
    <name type="scientific">Borreliella burgdorferi (strain ATCC 35210 / DSM 4680 / CIP 102532 / B31)</name>
    <name type="common">Borrelia burgdorferi</name>
    <dbReference type="NCBI Taxonomy" id="224326"/>
    <lineage>
        <taxon>Bacteria</taxon>
        <taxon>Pseudomonadati</taxon>
        <taxon>Spirochaetota</taxon>
        <taxon>Spirochaetia</taxon>
        <taxon>Spirochaetales</taxon>
        <taxon>Borreliaceae</taxon>
        <taxon>Borreliella</taxon>
    </lineage>
</organism>
<proteinExistence type="inferred from homology"/>
<gene>
    <name type="ordered locus">BB_0118</name>
</gene>
<evidence type="ECO:0000250" key="1"/>
<evidence type="ECO:0000255" key="2"/>
<evidence type="ECO:0000255" key="3">
    <source>
        <dbReference type="PROSITE-ProRule" id="PRU10095"/>
    </source>
</evidence>
<evidence type="ECO:0000305" key="4"/>